<dbReference type="EMBL" id="AB128049">
    <property type="protein sequence ID" value="BAD69725.1"/>
    <property type="molecule type" value="Genomic_DNA"/>
</dbReference>
<dbReference type="RefSeq" id="NP_001040613.1">
    <property type="nucleotide sequence ID" value="NM_001047148.1"/>
</dbReference>
<dbReference type="RefSeq" id="XP_014991411.1">
    <property type="nucleotide sequence ID" value="XM_015135925.2"/>
</dbReference>
<dbReference type="RefSeq" id="XP_014991412.1">
    <property type="nucleotide sequence ID" value="XM_015135926.2"/>
</dbReference>
<dbReference type="SMR" id="Q5TM20"/>
<dbReference type="FunCoup" id="Q5TM20">
    <property type="interactions" value="719"/>
</dbReference>
<dbReference type="STRING" id="9544.ENSMMUP00000011590"/>
<dbReference type="GlyCosmos" id="Q5TM20">
    <property type="glycosylation" value="2 sites, No reported glycans"/>
</dbReference>
<dbReference type="PaxDb" id="9544-ENSMMUP00000011590"/>
<dbReference type="Ensembl" id="ENSMMUT00000012357.4">
    <property type="protein sequence ID" value="ENSMMUP00000011590.2"/>
    <property type="gene ID" value="ENSMMUG00000008843.4"/>
</dbReference>
<dbReference type="GeneID" id="715425"/>
<dbReference type="KEGG" id="mcc:715425"/>
<dbReference type="CTD" id="4049"/>
<dbReference type="VEuPathDB" id="HostDB:ENSMMUG00000008843"/>
<dbReference type="VGNC" id="VGNC:74452">
    <property type="gene designation" value="LTA"/>
</dbReference>
<dbReference type="eggNOG" id="ENOG502S4K8">
    <property type="taxonomic scope" value="Eukaryota"/>
</dbReference>
<dbReference type="GeneTree" id="ENSGT01060000248544"/>
<dbReference type="HOGENOM" id="CLU_070352_4_0_1"/>
<dbReference type="InParanoid" id="Q5TM20"/>
<dbReference type="OMA" id="RSACQNV"/>
<dbReference type="OrthoDB" id="9940698at2759"/>
<dbReference type="TreeFam" id="TF332169"/>
<dbReference type="Proteomes" id="UP000006718">
    <property type="component" value="Chromosome 4"/>
</dbReference>
<dbReference type="Bgee" id="ENSMMUG00000008843">
    <property type="expression patterns" value="Expressed in spleen and 2 other cell types or tissues"/>
</dbReference>
<dbReference type="ExpressionAtlas" id="Q5TM20">
    <property type="expression patterns" value="baseline"/>
</dbReference>
<dbReference type="GO" id="GO:0005615">
    <property type="term" value="C:extracellular space"/>
    <property type="evidence" value="ECO:0000318"/>
    <property type="project" value="GO_Central"/>
</dbReference>
<dbReference type="GO" id="GO:0016020">
    <property type="term" value="C:membrane"/>
    <property type="evidence" value="ECO:0007669"/>
    <property type="project" value="UniProtKB-SubCell"/>
</dbReference>
<dbReference type="GO" id="GO:0005125">
    <property type="term" value="F:cytokine activity"/>
    <property type="evidence" value="ECO:0000318"/>
    <property type="project" value="GO_Central"/>
</dbReference>
<dbReference type="GO" id="GO:0005164">
    <property type="term" value="F:tumor necrosis factor receptor binding"/>
    <property type="evidence" value="ECO:0007669"/>
    <property type="project" value="InterPro"/>
</dbReference>
<dbReference type="GO" id="GO:0007166">
    <property type="term" value="P:cell surface receptor signaling pathway"/>
    <property type="evidence" value="ECO:0000318"/>
    <property type="project" value="GO_Central"/>
</dbReference>
<dbReference type="GO" id="GO:0050830">
    <property type="term" value="P:defense response to Gram-positive bacterium"/>
    <property type="evidence" value="ECO:0007669"/>
    <property type="project" value="Ensembl"/>
</dbReference>
<dbReference type="GO" id="GO:0006959">
    <property type="term" value="P:humoral immune response"/>
    <property type="evidence" value="ECO:0007669"/>
    <property type="project" value="Ensembl"/>
</dbReference>
<dbReference type="GO" id="GO:0006955">
    <property type="term" value="P:immune response"/>
    <property type="evidence" value="ECO:0000318"/>
    <property type="project" value="GO_Central"/>
</dbReference>
<dbReference type="GO" id="GO:0048535">
    <property type="term" value="P:lymph node development"/>
    <property type="evidence" value="ECO:0007669"/>
    <property type="project" value="Ensembl"/>
</dbReference>
<dbReference type="GO" id="GO:0043123">
    <property type="term" value="P:positive regulation of canonical NF-kappaB signal transduction"/>
    <property type="evidence" value="ECO:0000318"/>
    <property type="project" value="GO_Central"/>
</dbReference>
<dbReference type="GO" id="GO:0002876">
    <property type="term" value="P:positive regulation of chronic inflammatory response to antigenic stimulus"/>
    <property type="evidence" value="ECO:0007669"/>
    <property type="project" value="Ensembl"/>
</dbReference>
<dbReference type="GO" id="GO:2001238">
    <property type="term" value="P:positive regulation of extrinsic apoptotic signaling pathway"/>
    <property type="evidence" value="ECO:0000318"/>
    <property type="project" value="GO_Central"/>
</dbReference>
<dbReference type="GO" id="GO:0002925">
    <property type="term" value="P:positive regulation of humoral immune response mediated by circulating immunoglobulin"/>
    <property type="evidence" value="ECO:0007669"/>
    <property type="project" value="Ensembl"/>
</dbReference>
<dbReference type="GO" id="GO:0032729">
    <property type="term" value="P:positive regulation of type II interferon production"/>
    <property type="evidence" value="ECO:0007669"/>
    <property type="project" value="Ensembl"/>
</dbReference>
<dbReference type="CDD" id="cd00184">
    <property type="entry name" value="TNF"/>
    <property type="match status" value="1"/>
</dbReference>
<dbReference type="FunFam" id="2.60.120.40:FF:000016">
    <property type="entry name" value="Tumor necrosis factor"/>
    <property type="match status" value="1"/>
</dbReference>
<dbReference type="Gene3D" id="2.60.120.40">
    <property type="match status" value="1"/>
</dbReference>
<dbReference type="InterPro" id="IPR006053">
    <property type="entry name" value="TNF"/>
</dbReference>
<dbReference type="InterPro" id="IPR002960">
    <property type="entry name" value="TNF_beta"/>
</dbReference>
<dbReference type="InterPro" id="IPR021184">
    <property type="entry name" value="TNF_CS"/>
</dbReference>
<dbReference type="InterPro" id="IPR006052">
    <property type="entry name" value="TNF_dom"/>
</dbReference>
<dbReference type="InterPro" id="IPR008983">
    <property type="entry name" value="Tumour_necrosis_fac-like_dom"/>
</dbReference>
<dbReference type="PANTHER" id="PTHR11471:SF31">
    <property type="entry name" value="LYMPHOTOXIN-ALPHA"/>
    <property type="match status" value="1"/>
</dbReference>
<dbReference type="PANTHER" id="PTHR11471">
    <property type="entry name" value="TUMOR NECROSIS FACTOR FAMILY MEMBER"/>
    <property type="match status" value="1"/>
</dbReference>
<dbReference type="Pfam" id="PF00229">
    <property type="entry name" value="TNF"/>
    <property type="match status" value="1"/>
</dbReference>
<dbReference type="PRINTS" id="PR01234">
    <property type="entry name" value="TNECROSISFCT"/>
</dbReference>
<dbReference type="PRINTS" id="PR01236">
    <property type="entry name" value="TNFBETA"/>
</dbReference>
<dbReference type="SMART" id="SM00207">
    <property type="entry name" value="TNF"/>
    <property type="match status" value="1"/>
</dbReference>
<dbReference type="SUPFAM" id="SSF49842">
    <property type="entry name" value="TNF-like"/>
    <property type="match status" value="1"/>
</dbReference>
<dbReference type="PROSITE" id="PS00251">
    <property type="entry name" value="THD_1"/>
    <property type="match status" value="1"/>
</dbReference>
<dbReference type="PROSITE" id="PS50049">
    <property type="entry name" value="THD_2"/>
    <property type="match status" value="1"/>
</dbReference>
<comment type="function">
    <text evidence="2">Cytokine that in its homotrimeric form binds to TNFRSF1A/TNFR1, TNFRSF1B/TNFBR and TNFRSF14/HVEM (By similarity). In its heterotrimeric form with LTB binds to TNFRSF3/LTBR. Lymphotoxin is produced by lymphocytes and is cytotoxic for a wide range of tumor cells in vitro and in vivo.</text>
</comment>
<comment type="subunit">
    <text evidence="2">Homotrimer, and heterotrimer of either two LTB and one LTA subunits or (less prevalent) two LTA and one LTB subunits. Interacts with TNFRSF14.</text>
</comment>
<comment type="subcellular location">
    <subcellularLocation>
        <location evidence="1">Secreted</location>
    </subcellularLocation>
    <subcellularLocation>
        <location evidence="1">Membrane</location>
    </subcellularLocation>
    <text evidence="1">The homotrimer is secreted. The heterotrimer is membrane-associated.</text>
</comment>
<comment type="similarity">
    <text evidence="4">Belongs to the tumor necrosis factor family.</text>
</comment>
<gene>
    <name type="primary">LTA</name>
    <name type="synonym">TNFB</name>
    <name type="synonym">TNFSF1</name>
</gene>
<feature type="signal peptide" evidence="1">
    <location>
        <begin position="1"/>
        <end position="34"/>
    </location>
</feature>
<feature type="chain" id="PRO_0000034465" description="Lymphotoxin-alpha">
    <location>
        <begin position="35"/>
        <end position="205"/>
    </location>
</feature>
<feature type="domain" description="THD" evidence="3">
    <location>
        <begin position="63"/>
        <end position="205"/>
    </location>
</feature>
<feature type="glycosylation site" description="O-linked (GalNAc...) threonine" evidence="1">
    <location>
        <position position="41"/>
    </location>
</feature>
<feature type="glycosylation site" description="N-linked (GlcNAc...) asparagine" evidence="1">
    <location>
        <position position="96"/>
    </location>
</feature>
<reference key="1">
    <citation type="journal article" date="2004" name="Mol. Biol. Evol.">
        <title>Rhesus macaque class I duplicon structures, organization, and evolution within the alpha block of the major histocompatibility complex.</title>
        <authorList>
            <person name="Kulski J.K."/>
            <person name="Anzai T."/>
            <person name="Shiina T."/>
            <person name="Inoko H."/>
        </authorList>
    </citation>
    <scope>NUCLEOTIDE SEQUENCE [LARGE SCALE GENOMIC DNA]</scope>
</reference>
<proteinExistence type="inferred from homology"/>
<name>TNFB_MACMU</name>
<organism>
    <name type="scientific">Macaca mulatta</name>
    <name type="common">Rhesus macaque</name>
    <dbReference type="NCBI Taxonomy" id="9544"/>
    <lineage>
        <taxon>Eukaryota</taxon>
        <taxon>Metazoa</taxon>
        <taxon>Chordata</taxon>
        <taxon>Craniata</taxon>
        <taxon>Vertebrata</taxon>
        <taxon>Euteleostomi</taxon>
        <taxon>Mammalia</taxon>
        <taxon>Eutheria</taxon>
        <taxon>Euarchontoglires</taxon>
        <taxon>Primates</taxon>
        <taxon>Haplorrhini</taxon>
        <taxon>Catarrhini</taxon>
        <taxon>Cercopithecidae</taxon>
        <taxon>Cercopithecinae</taxon>
        <taxon>Macaca</taxon>
    </lineage>
</organism>
<accession>Q5TM20</accession>
<keyword id="KW-0202">Cytokine</keyword>
<keyword id="KW-0325">Glycoprotein</keyword>
<keyword id="KW-0472">Membrane</keyword>
<keyword id="KW-1185">Reference proteome</keyword>
<keyword id="KW-0964">Secreted</keyword>
<keyword id="KW-0732">Signal</keyword>
<sequence>MTPPERLFLSRVRGTPLHLLLLGLLLVLLPGAQGLPGVGLTPSAAQTARQHPKMHLAHSTLKPAAHLIGDPSKQNSLLWRANTDRAFLQDGFSLSNNSLLVPTSGIYFVYSQVVFSGKAYSPKATPTPLYLAHEVQLFSSQYPFHVPLLSSQKMVYPGLQEPWLHSMYHGAAFQLTQGDQLSTHTDGIPHLVLSPSTVFFGAFAL</sequence>
<evidence type="ECO:0000250" key="1"/>
<evidence type="ECO:0000250" key="2">
    <source>
        <dbReference type="UniProtKB" id="P01374"/>
    </source>
</evidence>
<evidence type="ECO:0000255" key="3">
    <source>
        <dbReference type="PROSITE-ProRule" id="PRU01387"/>
    </source>
</evidence>
<evidence type="ECO:0000305" key="4"/>
<protein>
    <recommendedName>
        <fullName>Lymphotoxin-alpha</fullName>
        <shortName>LT-alpha</shortName>
    </recommendedName>
    <alternativeName>
        <fullName>TNF-beta</fullName>
    </alternativeName>
    <alternativeName>
        <fullName>Tumor necrosis factor ligand superfamily member 1</fullName>
    </alternativeName>
</protein>